<protein>
    <recommendedName>
        <fullName evidence="1">Cobalt-precorrin-5B C(1)-methyltransferase</fullName>
        <ecNumber evidence="1">2.1.1.195</ecNumber>
    </recommendedName>
    <alternativeName>
        <fullName evidence="1">Cobalt-precorrin-6A synthase</fullName>
    </alternativeName>
</protein>
<evidence type="ECO:0000255" key="1">
    <source>
        <dbReference type="HAMAP-Rule" id="MF_00787"/>
    </source>
</evidence>
<proteinExistence type="inferred from homology"/>
<comment type="function">
    <text evidence="1">Catalyzes the methylation of C-1 in cobalt-precorrin-5B to form cobalt-precorrin-6A.</text>
</comment>
<comment type="catalytic activity">
    <reaction evidence="1">
        <text>Co-precorrin-5B + S-adenosyl-L-methionine = Co-precorrin-6A + S-adenosyl-L-homocysteine</text>
        <dbReference type="Rhea" id="RHEA:26285"/>
        <dbReference type="ChEBI" id="CHEBI:57856"/>
        <dbReference type="ChEBI" id="CHEBI:59789"/>
        <dbReference type="ChEBI" id="CHEBI:60063"/>
        <dbReference type="ChEBI" id="CHEBI:60064"/>
        <dbReference type="EC" id="2.1.1.195"/>
    </reaction>
</comment>
<comment type="pathway">
    <text evidence="1">Cofactor biosynthesis; adenosylcobalamin biosynthesis; cob(II)yrinate a,c-diamide from sirohydrochlorin (anaerobic route): step 6/10.</text>
</comment>
<comment type="similarity">
    <text evidence="1">Belongs to the CbiD family.</text>
</comment>
<keyword id="KW-0169">Cobalamin biosynthesis</keyword>
<keyword id="KW-0489">Methyltransferase</keyword>
<keyword id="KW-1185">Reference proteome</keyword>
<keyword id="KW-0949">S-adenosyl-L-methionine</keyword>
<keyword id="KW-0808">Transferase</keyword>
<feature type="chain" id="PRO_0000141675" description="Cobalt-precorrin-5B C(1)-methyltransferase">
    <location>
        <begin position="1"/>
        <end position="381"/>
    </location>
</feature>
<sequence>MRGFTLPVWVVAAAKAAVKVLIGESWQSHEVIELLNNEESIVVPIRSASILDNGEKALGITNCDPGECLDLTRGLEIWVCLRYIENQQIISSDGLELEPWLKIIPGYGVGKFDLTNDISISEFARQLLIVNLKPYRKEGYSLNLEIIFPSGQELAEKTSNHAFGVVDGLALIGTQADVQESASPKKLQSTIHALRSRCAESSFTGSLIFVIGENGLDLALQYGIDSSKIIKTGNWLGPLLVAAAQEKVQQLLIFGYHGKLIKLAGGVFHTHHHLADNRLETLIAFAVKERIPLSLIKEFEEAVSIEAALSILENKDISTAKKLWKRLAVEIEKRSIDYVKRYETSSIEIGAVMFDRARKIRWAGNYALKQINSFGLKLEDY</sequence>
<accession>Q7VEH6</accession>
<organism>
    <name type="scientific">Prochlorococcus marinus (strain SARG / CCMP1375 / SS120)</name>
    <dbReference type="NCBI Taxonomy" id="167539"/>
    <lineage>
        <taxon>Bacteria</taxon>
        <taxon>Bacillati</taxon>
        <taxon>Cyanobacteriota</taxon>
        <taxon>Cyanophyceae</taxon>
        <taxon>Synechococcales</taxon>
        <taxon>Prochlorococcaceae</taxon>
        <taxon>Prochlorococcus</taxon>
    </lineage>
</organism>
<dbReference type="EC" id="2.1.1.195" evidence="1"/>
<dbReference type="EMBL" id="AE017126">
    <property type="protein sequence ID" value="AAP99083.1"/>
    <property type="molecule type" value="Genomic_DNA"/>
</dbReference>
<dbReference type="RefSeq" id="NP_874431.1">
    <property type="nucleotide sequence ID" value="NC_005042.1"/>
</dbReference>
<dbReference type="RefSeq" id="WP_011124192.1">
    <property type="nucleotide sequence ID" value="NC_005042.1"/>
</dbReference>
<dbReference type="SMR" id="Q7VEH6"/>
<dbReference type="STRING" id="167539.Pro_0037"/>
<dbReference type="EnsemblBacteria" id="AAP99083">
    <property type="protein sequence ID" value="AAP99083"/>
    <property type="gene ID" value="Pro_0037"/>
</dbReference>
<dbReference type="KEGG" id="pma:Pro_0037"/>
<dbReference type="PATRIC" id="fig|167539.5.peg.37"/>
<dbReference type="eggNOG" id="COG1903">
    <property type="taxonomic scope" value="Bacteria"/>
</dbReference>
<dbReference type="HOGENOM" id="CLU_041273_1_2_3"/>
<dbReference type="OrthoDB" id="6439987at2"/>
<dbReference type="UniPathway" id="UPA00148">
    <property type="reaction ID" value="UER00227"/>
</dbReference>
<dbReference type="Proteomes" id="UP000001420">
    <property type="component" value="Chromosome"/>
</dbReference>
<dbReference type="GO" id="GO:0043780">
    <property type="term" value="F:cobalt-precorrin-5B C1-methyltransferase activity"/>
    <property type="evidence" value="ECO:0007669"/>
    <property type="project" value="RHEA"/>
</dbReference>
<dbReference type="GO" id="GO:0019251">
    <property type="term" value="P:anaerobic cobalamin biosynthetic process"/>
    <property type="evidence" value="ECO:0007669"/>
    <property type="project" value="UniProtKB-UniRule"/>
</dbReference>
<dbReference type="GO" id="GO:0032259">
    <property type="term" value="P:methylation"/>
    <property type="evidence" value="ECO:0007669"/>
    <property type="project" value="UniProtKB-KW"/>
</dbReference>
<dbReference type="Gene3D" id="3.30.2110.10">
    <property type="entry name" value="CbiD-like"/>
    <property type="match status" value="1"/>
</dbReference>
<dbReference type="HAMAP" id="MF_00787">
    <property type="entry name" value="CbiD"/>
    <property type="match status" value="1"/>
</dbReference>
<dbReference type="InterPro" id="IPR002748">
    <property type="entry name" value="CbiD"/>
</dbReference>
<dbReference type="InterPro" id="IPR036074">
    <property type="entry name" value="CbiD_sf"/>
</dbReference>
<dbReference type="NCBIfam" id="TIGR00312">
    <property type="entry name" value="cbiD"/>
    <property type="match status" value="1"/>
</dbReference>
<dbReference type="PANTHER" id="PTHR35863">
    <property type="entry name" value="COBALT-PRECORRIN-5B C(1)-METHYLTRANSFERASE"/>
    <property type="match status" value="1"/>
</dbReference>
<dbReference type="PANTHER" id="PTHR35863:SF1">
    <property type="entry name" value="COBALT-PRECORRIN-5B C(1)-METHYLTRANSFERASE"/>
    <property type="match status" value="1"/>
</dbReference>
<dbReference type="Pfam" id="PF01888">
    <property type="entry name" value="CbiD"/>
    <property type="match status" value="1"/>
</dbReference>
<dbReference type="PIRSF" id="PIRSF026782">
    <property type="entry name" value="CbiD"/>
    <property type="match status" value="1"/>
</dbReference>
<dbReference type="SUPFAM" id="SSF111342">
    <property type="entry name" value="CbiD-like"/>
    <property type="match status" value="1"/>
</dbReference>
<reference key="1">
    <citation type="journal article" date="2003" name="Proc. Natl. Acad. Sci. U.S.A.">
        <title>Genome sequence of the cyanobacterium Prochlorococcus marinus SS120, a nearly minimal oxyphototrophic genome.</title>
        <authorList>
            <person name="Dufresne A."/>
            <person name="Salanoubat M."/>
            <person name="Partensky F."/>
            <person name="Artiguenave F."/>
            <person name="Axmann I.M."/>
            <person name="Barbe V."/>
            <person name="Duprat S."/>
            <person name="Galperin M.Y."/>
            <person name="Koonin E.V."/>
            <person name="Le Gall F."/>
            <person name="Makarova K.S."/>
            <person name="Ostrowski M."/>
            <person name="Oztas S."/>
            <person name="Robert C."/>
            <person name="Rogozin I.B."/>
            <person name="Scanlan D.J."/>
            <person name="Tandeau de Marsac N."/>
            <person name="Weissenbach J."/>
            <person name="Wincker P."/>
            <person name="Wolf Y.I."/>
            <person name="Hess W.R."/>
        </authorList>
    </citation>
    <scope>NUCLEOTIDE SEQUENCE [LARGE SCALE GENOMIC DNA]</scope>
    <source>
        <strain>SARG / CCMP1375 / SS120</strain>
    </source>
</reference>
<name>CBID_PROMA</name>
<gene>
    <name evidence="1" type="primary">cbiD</name>
    <name type="ordered locus">Pro_0037</name>
</gene>